<keyword id="KW-0067">ATP-binding</keyword>
<keyword id="KW-0143">Chaperone</keyword>
<keyword id="KW-0547">Nucleotide-binding</keyword>
<keyword id="KW-0597">Phosphoprotein</keyword>
<keyword id="KW-0346">Stress response</keyword>
<accession>A0QLZ6</accession>
<reference key="1">
    <citation type="submission" date="2006-10" db="EMBL/GenBank/DDBJ databases">
        <authorList>
            <person name="Fleischmann R.D."/>
            <person name="Dodson R.J."/>
            <person name="Haft D.H."/>
            <person name="Merkel J.S."/>
            <person name="Nelson W.C."/>
            <person name="Fraser C.M."/>
        </authorList>
    </citation>
    <scope>NUCLEOTIDE SEQUENCE [LARGE SCALE GENOMIC DNA]</scope>
    <source>
        <strain>104</strain>
    </source>
</reference>
<comment type="function">
    <text evidence="1">Acts as a chaperone.</text>
</comment>
<comment type="induction">
    <text evidence="1">By stress conditions e.g. heat shock.</text>
</comment>
<comment type="similarity">
    <text evidence="1">Belongs to the heat shock protein 70 family.</text>
</comment>
<gene>
    <name evidence="1" type="primary">dnaK</name>
    <name type="ordered locus">MAV_4808</name>
</gene>
<protein>
    <recommendedName>
        <fullName evidence="1">Chaperone protein DnaK</fullName>
    </recommendedName>
    <alternativeName>
        <fullName evidence="1">HSP70</fullName>
    </alternativeName>
    <alternativeName>
        <fullName evidence="1">Heat shock 70 kDa protein</fullName>
    </alternativeName>
    <alternativeName>
        <fullName evidence="1">Heat shock protein 70</fullName>
    </alternativeName>
</protein>
<proteinExistence type="inferred from homology"/>
<name>DNAK_MYCA1</name>
<sequence length="623" mass="66527">MARAVGIDLGTTNSVVAVLEGGDPVVVANSEGSRTTPSIVAFARNGEVLVGQPAKNQAVTNVDRTIRSVKRHMGTDWSIEIDGKKYTAQEISARVLMKLKRDAEAYLGEDITDAVITVPAYFNDAQRQATKEAGQIAGLNVLRIVNEPTAAALAYGLDKGEKEQTILVFDLGGGTFDVSLLEIGEGVVEVRATSGDNHLGGDDWDDRIVNWLVDKFKGTSGIDLTKDKMAMQRLREAAEKAKIELSSSQSTSINLPYITVDADKNPLFLDEQLTRAEFQRITQDLLDRTRQPFKSVIADAGISVSDIDHVVLVGGSTRMPAVTDLVKELTGGKEPNKGVNPDEVVAVGAALQAGVLKGEVKDVLLLDVTPLSLGIETKGGVMTKLIERNTTIPTKRSETFTTADDNQPSVQIQVYQGEREIAAHNKLLGSFELTGIPPAPRGVPQIEVTFDIDANGIVHVTAKDKGTGKENTIKIQEGSGLSKEEIDRMIKDAEAHAEEDRKRREEADVRNQAESLVYQTEKFVKDQREAEGGSKVPEETLSKVDAAIADAKTALGGTDITAIKSAMEKLGQESQALGQAIYEATQAESAQAGGPDGAAAGGGSGSADDVVDAEVVDDDRESK</sequence>
<feature type="chain" id="PRO_1000059605" description="Chaperone protein DnaK">
    <location>
        <begin position="1"/>
        <end position="623"/>
    </location>
</feature>
<feature type="region of interest" description="Disordered" evidence="2">
    <location>
        <begin position="587"/>
        <end position="623"/>
    </location>
</feature>
<feature type="compositionally biased region" description="Gly residues" evidence="2">
    <location>
        <begin position="594"/>
        <end position="605"/>
    </location>
</feature>
<feature type="compositionally biased region" description="Acidic residues" evidence="2">
    <location>
        <begin position="609"/>
        <end position="623"/>
    </location>
</feature>
<feature type="modified residue" description="Phosphothreonine; by autocatalysis" evidence="1">
    <location>
        <position position="175"/>
    </location>
</feature>
<dbReference type="EMBL" id="CP000479">
    <property type="protein sequence ID" value="ABK67392.1"/>
    <property type="molecule type" value="Genomic_DNA"/>
</dbReference>
<dbReference type="RefSeq" id="WP_009979480.1">
    <property type="nucleotide sequence ID" value="NC_008595.1"/>
</dbReference>
<dbReference type="SMR" id="A0QLZ6"/>
<dbReference type="GeneID" id="75272330"/>
<dbReference type="KEGG" id="mav:MAV_4808"/>
<dbReference type="HOGENOM" id="CLU_005965_2_4_11"/>
<dbReference type="Proteomes" id="UP000001574">
    <property type="component" value="Chromosome"/>
</dbReference>
<dbReference type="GO" id="GO:0005524">
    <property type="term" value="F:ATP binding"/>
    <property type="evidence" value="ECO:0007669"/>
    <property type="project" value="UniProtKB-UniRule"/>
</dbReference>
<dbReference type="GO" id="GO:0140662">
    <property type="term" value="F:ATP-dependent protein folding chaperone"/>
    <property type="evidence" value="ECO:0007669"/>
    <property type="project" value="InterPro"/>
</dbReference>
<dbReference type="GO" id="GO:0051082">
    <property type="term" value="F:unfolded protein binding"/>
    <property type="evidence" value="ECO:0007669"/>
    <property type="project" value="InterPro"/>
</dbReference>
<dbReference type="CDD" id="cd10234">
    <property type="entry name" value="ASKHA_NBD_HSP70_DnaK-like"/>
    <property type="match status" value="1"/>
</dbReference>
<dbReference type="FunFam" id="2.60.34.10:FF:000014">
    <property type="entry name" value="Chaperone protein DnaK HSP70"/>
    <property type="match status" value="1"/>
</dbReference>
<dbReference type="FunFam" id="1.20.1270.10:FF:000001">
    <property type="entry name" value="Molecular chaperone DnaK"/>
    <property type="match status" value="1"/>
</dbReference>
<dbReference type="FunFam" id="3.30.420.40:FF:000071">
    <property type="entry name" value="Molecular chaperone DnaK"/>
    <property type="match status" value="1"/>
</dbReference>
<dbReference type="FunFam" id="3.90.640.10:FF:000003">
    <property type="entry name" value="Molecular chaperone DnaK"/>
    <property type="match status" value="1"/>
</dbReference>
<dbReference type="Gene3D" id="1.20.1270.10">
    <property type="match status" value="1"/>
</dbReference>
<dbReference type="Gene3D" id="3.30.30.30">
    <property type="match status" value="1"/>
</dbReference>
<dbReference type="Gene3D" id="3.30.420.40">
    <property type="match status" value="3"/>
</dbReference>
<dbReference type="Gene3D" id="3.90.640.10">
    <property type="entry name" value="Actin, Chain A, domain 4"/>
    <property type="match status" value="1"/>
</dbReference>
<dbReference type="Gene3D" id="2.60.34.10">
    <property type="entry name" value="Substrate Binding Domain Of DNAk, Chain A, domain 1"/>
    <property type="match status" value="1"/>
</dbReference>
<dbReference type="HAMAP" id="MF_00332">
    <property type="entry name" value="DnaK"/>
    <property type="match status" value="1"/>
</dbReference>
<dbReference type="InterPro" id="IPR043129">
    <property type="entry name" value="ATPase_NBD"/>
</dbReference>
<dbReference type="InterPro" id="IPR012725">
    <property type="entry name" value="Chaperone_DnaK"/>
</dbReference>
<dbReference type="InterPro" id="IPR018181">
    <property type="entry name" value="Heat_shock_70_CS"/>
</dbReference>
<dbReference type="InterPro" id="IPR029048">
    <property type="entry name" value="HSP70_C_sf"/>
</dbReference>
<dbReference type="InterPro" id="IPR029047">
    <property type="entry name" value="HSP70_peptide-bd_sf"/>
</dbReference>
<dbReference type="InterPro" id="IPR013126">
    <property type="entry name" value="Hsp_70_fam"/>
</dbReference>
<dbReference type="NCBIfam" id="NF001413">
    <property type="entry name" value="PRK00290.1"/>
    <property type="match status" value="1"/>
</dbReference>
<dbReference type="NCBIfam" id="TIGR02350">
    <property type="entry name" value="prok_dnaK"/>
    <property type="match status" value="1"/>
</dbReference>
<dbReference type="PANTHER" id="PTHR19375">
    <property type="entry name" value="HEAT SHOCK PROTEIN 70KDA"/>
    <property type="match status" value="1"/>
</dbReference>
<dbReference type="Pfam" id="PF00012">
    <property type="entry name" value="HSP70"/>
    <property type="match status" value="1"/>
</dbReference>
<dbReference type="PRINTS" id="PR00301">
    <property type="entry name" value="HEATSHOCK70"/>
</dbReference>
<dbReference type="SUPFAM" id="SSF53067">
    <property type="entry name" value="Actin-like ATPase domain"/>
    <property type="match status" value="2"/>
</dbReference>
<dbReference type="SUPFAM" id="SSF100934">
    <property type="entry name" value="Heat shock protein 70kD (HSP70), C-terminal subdomain"/>
    <property type="match status" value="1"/>
</dbReference>
<dbReference type="SUPFAM" id="SSF100920">
    <property type="entry name" value="Heat shock protein 70kD (HSP70), peptide-binding domain"/>
    <property type="match status" value="1"/>
</dbReference>
<dbReference type="PROSITE" id="PS00297">
    <property type="entry name" value="HSP70_1"/>
    <property type="match status" value="1"/>
</dbReference>
<dbReference type="PROSITE" id="PS00329">
    <property type="entry name" value="HSP70_2"/>
    <property type="match status" value="1"/>
</dbReference>
<dbReference type="PROSITE" id="PS01036">
    <property type="entry name" value="HSP70_3"/>
    <property type="match status" value="1"/>
</dbReference>
<organism>
    <name type="scientific">Mycobacterium avium (strain 104)</name>
    <dbReference type="NCBI Taxonomy" id="243243"/>
    <lineage>
        <taxon>Bacteria</taxon>
        <taxon>Bacillati</taxon>
        <taxon>Actinomycetota</taxon>
        <taxon>Actinomycetes</taxon>
        <taxon>Mycobacteriales</taxon>
        <taxon>Mycobacteriaceae</taxon>
        <taxon>Mycobacterium</taxon>
        <taxon>Mycobacterium avium complex (MAC)</taxon>
    </lineage>
</organism>
<evidence type="ECO:0000255" key="1">
    <source>
        <dbReference type="HAMAP-Rule" id="MF_00332"/>
    </source>
</evidence>
<evidence type="ECO:0000256" key="2">
    <source>
        <dbReference type="SAM" id="MobiDB-lite"/>
    </source>
</evidence>